<evidence type="ECO:0000255" key="1">
    <source>
        <dbReference type="HAMAP-Rule" id="MF_00117"/>
    </source>
</evidence>
<feature type="chain" id="PRO_1000057787" description="33 kDa chaperonin">
    <location>
        <begin position="1"/>
        <end position="292"/>
    </location>
</feature>
<feature type="disulfide bond" description="Redox-active" evidence="1">
    <location>
        <begin position="230"/>
        <end position="232"/>
    </location>
</feature>
<feature type="disulfide bond" description="Redox-active" evidence="1">
    <location>
        <begin position="263"/>
        <end position="266"/>
    </location>
</feature>
<name>HSLO_SERP5</name>
<protein>
    <recommendedName>
        <fullName evidence="1">33 kDa chaperonin</fullName>
    </recommendedName>
    <alternativeName>
        <fullName evidence="1">Heat shock protein 33 homolog</fullName>
        <shortName evidence="1">HSP33</shortName>
    </alternativeName>
</protein>
<gene>
    <name evidence="1" type="primary">hslO</name>
    <name type="ordered locus">Spro_4616</name>
</gene>
<dbReference type="EMBL" id="CP000826">
    <property type="protein sequence ID" value="ABV43709.1"/>
    <property type="molecule type" value="Genomic_DNA"/>
</dbReference>
<dbReference type="SMR" id="A8GKR9"/>
<dbReference type="STRING" id="399741.Spro_4616"/>
<dbReference type="KEGG" id="spe:Spro_4616"/>
<dbReference type="eggNOG" id="COG1281">
    <property type="taxonomic scope" value="Bacteria"/>
</dbReference>
<dbReference type="HOGENOM" id="CLU_054493_0_0_6"/>
<dbReference type="OrthoDB" id="9793753at2"/>
<dbReference type="GO" id="GO:0005737">
    <property type="term" value="C:cytoplasm"/>
    <property type="evidence" value="ECO:0007669"/>
    <property type="project" value="UniProtKB-SubCell"/>
</dbReference>
<dbReference type="GO" id="GO:0044183">
    <property type="term" value="F:protein folding chaperone"/>
    <property type="evidence" value="ECO:0007669"/>
    <property type="project" value="TreeGrafter"/>
</dbReference>
<dbReference type="GO" id="GO:0051082">
    <property type="term" value="F:unfolded protein binding"/>
    <property type="evidence" value="ECO:0007669"/>
    <property type="project" value="UniProtKB-UniRule"/>
</dbReference>
<dbReference type="GO" id="GO:0042026">
    <property type="term" value="P:protein refolding"/>
    <property type="evidence" value="ECO:0007669"/>
    <property type="project" value="TreeGrafter"/>
</dbReference>
<dbReference type="CDD" id="cd00498">
    <property type="entry name" value="Hsp33"/>
    <property type="match status" value="1"/>
</dbReference>
<dbReference type="Gene3D" id="1.10.287.480">
    <property type="entry name" value="helix hairpin bin"/>
    <property type="match status" value="1"/>
</dbReference>
<dbReference type="Gene3D" id="3.55.30.10">
    <property type="entry name" value="Hsp33 domain"/>
    <property type="match status" value="1"/>
</dbReference>
<dbReference type="Gene3D" id="3.90.1280.10">
    <property type="entry name" value="HSP33 redox switch-like"/>
    <property type="match status" value="1"/>
</dbReference>
<dbReference type="HAMAP" id="MF_00117">
    <property type="entry name" value="HslO"/>
    <property type="match status" value="1"/>
</dbReference>
<dbReference type="InterPro" id="IPR000397">
    <property type="entry name" value="Heat_shock_Hsp33"/>
</dbReference>
<dbReference type="InterPro" id="IPR016154">
    <property type="entry name" value="Heat_shock_Hsp33_C"/>
</dbReference>
<dbReference type="InterPro" id="IPR016153">
    <property type="entry name" value="Heat_shock_Hsp33_N"/>
</dbReference>
<dbReference type="InterPro" id="IPR023212">
    <property type="entry name" value="Hsp33_helix_hairpin_bin_dom_sf"/>
</dbReference>
<dbReference type="NCBIfam" id="NF001033">
    <property type="entry name" value="PRK00114.1"/>
    <property type="match status" value="1"/>
</dbReference>
<dbReference type="PANTHER" id="PTHR30111">
    <property type="entry name" value="33 KDA CHAPERONIN"/>
    <property type="match status" value="1"/>
</dbReference>
<dbReference type="PANTHER" id="PTHR30111:SF1">
    <property type="entry name" value="33 KDA CHAPERONIN"/>
    <property type="match status" value="1"/>
</dbReference>
<dbReference type="Pfam" id="PF01430">
    <property type="entry name" value="HSP33"/>
    <property type="match status" value="1"/>
</dbReference>
<dbReference type="PIRSF" id="PIRSF005261">
    <property type="entry name" value="Heat_shock_Hsp33"/>
    <property type="match status" value="1"/>
</dbReference>
<dbReference type="SUPFAM" id="SSF64397">
    <property type="entry name" value="Hsp33 domain"/>
    <property type="match status" value="1"/>
</dbReference>
<dbReference type="SUPFAM" id="SSF118352">
    <property type="entry name" value="HSP33 redox switch-like"/>
    <property type="match status" value="1"/>
</dbReference>
<organism>
    <name type="scientific">Serratia proteamaculans (strain 568)</name>
    <dbReference type="NCBI Taxonomy" id="399741"/>
    <lineage>
        <taxon>Bacteria</taxon>
        <taxon>Pseudomonadati</taxon>
        <taxon>Pseudomonadota</taxon>
        <taxon>Gammaproteobacteria</taxon>
        <taxon>Enterobacterales</taxon>
        <taxon>Yersiniaceae</taxon>
        <taxon>Serratia</taxon>
    </lineage>
</organism>
<comment type="function">
    <text evidence="1">Redox regulated molecular chaperone. Protects both thermally unfolding and oxidatively damaged proteins from irreversible aggregation. Plays an important role in the bacterial defense system toward oxidative stress.</text>
</comment>
<comment type="subcellular location">
    <subcellularLocation>
        <location evidence="1">Cytoplasm</location>
    </subcellularLocation>
</comment>
<comment type="PTM">
    <text evidence="1">Under oxidizing conditions two disulfide bonds are formed involving the reactive cysteines. Under reducing conditions zinc is bound to the reactive cysteines and the protein is inactive.</text>
</comment>
<comment type="similarity">
    <text evidence="1">Belongs to the HSP33 family.</text>
</comment>
<proteinExistence type="inferred from homology"/>
<sequence length="292" mass="32455">MSNHDQLHRYLFENYAVRGELVTVSETYQQVLNNHDYPAPVKKLLGELLVATSLLTATLKFDGDITVQLQGDGPLKLAVINGNNRQEMRGVARVQSEIADDSTLHQMIGNGVMVITIAPTEGERYQGVVALEGETLAECLEAYFRQSEQLPTRLFIRTGESEGQPAAGGMLLQVLPAQDGNADDFDHLVQLTNTVKSEELFGLPANEVLYRLYHQEEVTLYEPQDVVFRCTCSRQRCADALITLPAEEVAQMLEQDGNIDMHCDYCGNHYVFDAMDVAALYTGNTGESEQLH</sequence>
<accession>A8GKR9</accession>
<reference key="1">
    <citation type="submission" date="2007-09" db="EMBL/GenBank/DDBJ databases">
        <title>Complete sequence of chromosome of Serratia proteamaculans 568.</title>
        <authorList>
            <consortium name="US DOE Joint Genome Institute"/>
            <person name="Copeland A."/>
            <person name="Lucas S."/>
            <person name="Lapidus A."/>
            <person name="Barry K."/>
            <person name="Glavina del Rio T."/>
            <person name="Dalin E."/>
            <person name="Tice H."/>
            <person name="Pitluck S."/>
            <person name="Chain P."/>
            <person name="Malfatti S."/>
            <person name="Shin M."/>
            <person name="Vergez L."/>
            <person name="Schmutz J."/>
            <person name="Larimer F."/>
            <person name="Land M."/>
            <person name="Hauser L."/>
            <person name="Kyrpides N."/>
            <person name="Kim E."/>
            <person name="Taghavi S."/>
            <person name="Newman L."/>
            <person name="Vangronsveld J."/>
            <person name="van der Lelie D."/>
            <person name="Richardson P."/>
        </authorList>
    </citation>
    <scope>NUCLEOTIDE SEQUENCE [LARGE SCALE GENOMIC DNA]</scope>
    <source>
        <strain>568</strain>
    </source>
</reference>
<keyword id="KW-0143">Chaperone</keyword>
<keyword id="KW-0963">Cytoplasm</keyword>
<keyword id="KW-1015">Disulfide bond</keyword>
<keyword id="KW-0676">Redox-active center</keyword>
<keyword id="KW-0862">Zinc</keyword>